<sequence length="161" mass="18799">MIDSEGFRPNVGIILANDDGQVLWAKRIGHNAWQFPQGGIQFGETPEQALFRELREEIGLLPEHVQIIAQTKGWLRYRLPHRYIRSDSDPVCIGQKQKWFLLKLTAPAKNIQLNLADPPEFDEWQWVSYWYPLGQVVNFKRDVYRKAMVELCTQLPVQQLP</sequence>
<accession>B7H0U1</accession>
<dbReference type="EC" id="3.6.1.-" evidence="1"/>
<dbReference type="EMBL" id="CP001172">
    <property type="protein sequence ID" value="ACJ58389.1"/>
    <property type="molecule type" value="Genomic_DNA"/>
</dbReference>
<dbReference type="RefSeq" id="WP_000567254.1">
    <property type="nucleotide sequence ID" value="NZ_CP001172.1"/>
</dbReference>
<dbReference type="SMR" id="B7H0U1"/>
<dbReference type="HOGENOM" id="CLU_087195_3_1_6"/>
<dbReference type="Proteomes" id="UP000006924">
    <property type="component" value="Chromosome"/>
</dbReference>
<dbReference type="GO" id="GO:0016462">
    <property type="term" value="F:pyrophosphatase activity"/>
    <property type="evidence" value="ECO:0007669"/>
    <property type="project" value="UniProtKB-ARBA"/>
</dbReference>
<dbReference type="CDD" id="cd03671">
    <property type="entry name" value="NUDIX_Ap4A_hydrolase_plant_like"/>
    <property type="match status" value="1"/>
</dbReference>
<dbReference type="FunFam" id="3.90.79.10:FF:000001">
    <property type="entry name" value="RNA pyrophosphohydrolase"/>
    <property type="match status" value="1"/>
</dbReference>
<dbReference type="Gene3D" id="3.90.79.10">
    <property type="entry name" value="Nucleoside Triphosphate Pyrophosphohydrolase"/>
    <property type="match status" value="1"/>
</dbReference>
<dbReference type="HAMAP" id="MF_00298">
    <property type="entry name" value="Nudix_RppH"/>
    <property type="match status" value="1"/>
</dbReference>
<dbReference type="InterPro" id="IPR020476">
    <property type="entry name" value="Nudix_hydrolase"/>
</dbReference>
<dbReference type="InterPro" id="IPR015797">
    <property type="entry name" value="NUDIX_hydrolase-like_dom_sf"/>
</dbReference>
<dbReference type="InterPro" id="IPR020084">
    <property type="entry name" value="NUDIX_hydrolase_CS"/>
</dbReference>
<dbReference type="InterPro" id="IPR000086">
    <property type="entry name" value="NUDIX_hydrolase_dom"/>
</dbReference>
<dbReference type="InterPro" id="IPR022927">
    <property type="entry name" value="RppH"/>
</dbReference>
<dbReference type="NCBIfam" id="NF001934">
    <property type="entry name" value="PRK00714.1-1"/>
    <property type="match status" value="1"/>
</dbReference>
<dbReference type="NCBIfam" id="NF001937">
    <property type="entry name" value="PRK00714.1-4"/>
    <property type="match status" value="1"/>
</dbReference>
<dbReference type="NCBIfam" id="NF001938">
    <property type="entry name" value="PRK00714.1-5"/>
    <property type="match status" value="1"/>
</dbReference>
<dbReference type="PANTHER" id="PTHR43736">
    <property type="entry name" value="ADP-RIBOSE PYROPHOSPHATASE"/>
    <property type="match status" value="1"/>
</dbReference>
<dbReference type="PANTHER" id="PTHR43736:SF1">
    <property type="entry name" value="DIHYDRONEOPTERIN TRIPHOSPHATE DIPHOSPHATASE"/>
    <property type="match status" value="1"/>
</dbReference>
<dbReference type="Pfam" id="PF00293">
    <property type="entry name" value="NUDIX"/>
    <property type="match status" value="1"/>
</dbReference>
<dbReference type="PRINTS" id="PR00502">
    <property type="entry name" value="NUDIXFAMILY"/>
</dbReference>
<dbReference type="SUPFAM" id="SSF55811">
    <property type="entry name" value="Nudix"/>
    <property type="match status" value="1"/>
</dbReference>
<dbReference type="PROSITE" id="PS51462">
    <property type="entry name" value="NUDIX"/>
    <property type="match status" value="1"/>
</dbReference>
<dbReference type="PROSITE" id="PS00893">
    <property type="entry name" value="NUDIX_BOX"/>
    <property type="match status" value="1"/>
</dbReference>
<evidence type="ECO:0000255" key="1">
    <source>
        <dbReference type="HAMAP-Rule" id="MF_00298"/>
    </source>
</evidence>
<organism>
    <name type="scientific">Acinetobacter baumannii (strain AB307-0294)</name>
    <dbReference type="NCBI Taxonomy" id="557600"/>
    <lineage>
        <taxon>Bacteria</taxon>
        <taxon>Pseudomonadati</taxon>
        <taxon>Pseudomonadota</taxon>
        <taxon>Gammaproteobacteria</taxon>
        <taxon>Moraxellales</taxon>
        <taxon>Moraxellaceae</taxon>
        <taxon>Acinetobacter</taxon>
        <taxon>Acinetobacter calcoaceticus/baumannii complex</taxon>
    </lineage>
</organism>
<keyword id="KW-0378">Hydrolase</keyword>
<gene>
    <name evidence="1" type="primary">rppH</name>
    <name evidence="1" type="synonym">nudH</name>
    <name type="ordered locus">ABBFA_003123</name>
</gene>
<reference key="1">
    <citation type="journal article" date="2008" name="J. Bacteriol.">
        <title>Comparative genome sequence analysis of multidrug-resistant Acinetobacter baumannii.</title>
        <authorList>
            <person name="Adams M.D."/>
            <person name="Goglin K."/>
            <person name="Molyneaux N."/>
            <person name="Hujer K.M."/>
            <person name="Lavender H."/>
            <person name="Jamison J.J."/>
            <person name="MacDonald I.J."/>
            <person name="Martin K.M."/>
            <person name="Russo T."/>
            <person name="Campagnari A.A."/>
            <person name="Hujer A.M."/>
            <person name="Bonomo R.A."/>
            <person name="Gill S.R."/>
        </authorList>
    </citation>
    <scope>NUCLEOTIDE SEQUENCE [LARGE SCALE GENOMIC DNA]</scope>
    <source>
        <strain>AB307-0294</strain>
    </source>
</reference>
<proteinExistence type="inferred from homology"/>
<comment type="function">
    <text evidence="1">Accelerates the degradation of transcripts by removing pyrophosphate from the 5'-end of triphosphorylated RNA, leading to a more labile monophosphorylated state that can stimulate subsequent ribonuclease cleavage.</text>
</comment>
<comment type="cofactor">
    <cofactor evidence="1">
        <name>a divalent metal cation</name>
        <dbReference type="ChEBI" id="CHEBI:60240"/>
    </cofactor>
</comment>
<comment type="similarity">
    <text evidence="1">Belongs to the Nudix hydrolase family. RppH subfamily.</text>
</comment>
<name>RPPH_ACIB3</name>
<feature type="chain" id="PRO_1000119468" description="RNA pyrophosphohydrolase">
    <location>
        <begin position="1"/>
        <end position="161"/>
    </location>
</feature>
<feature type="domain" description="Nudix hydrolase" evidence="1">
    <location>
        <begin position="6"/>
        <end position="149"/>
    </location>
</feature>
<feature type="short sequence motif" description="Nudix box">
    <location>
        <begin position="38"/>
        <end position="59"/>
    </location>
</feature>
<protein>
    <recommendedName>
        <fullName evidence="1">RNA pyrophosphohydrolase</fullName>
        <ecNumber evidence="1">3.6.1.-</ecNumber>
    </recommendedName>
    <alternativeName>
        <fullName evidence="1">(Di)nucleoside polyphosphate hydrolase</fullName>
    </alternativeName>
</protein>